<name>E1313_ARATH</name>
<proteinExistence type="evidence at transcript level"/>
<dbReference type="EC" id="3.2.1.39"/>
<dbReference type="EMBL" id="AB013392">
    <property type="protein sequence ID" value="BAB09876.1"/>
    <property type="molecule type" value="Genomic_DNA"/>
</dbReference>
<dbReference type="EMBL" id="CP002688">
    <property type="protein sequence ID" value="AED96784.1"/>
    <property type="molecule type" value="Genomic_DNA"/>
</dbReference>
<dbReference type="EMBL" id="AY133637">
    <property type="protein sequence ID" value="AAM91467.1"/>
    <property type="molecule type" value="mRNA"/>
</dbReference>
<dbReference type="EMBL" id="AY075591">
    <property type="protein sequence ID" value="AAL91612.1"/>
    <property type="molecule type" value="mRNA"/>
</dbReference>
<dbReference type="RefSeq" id="NP_200470.1">
    <property type="nucleotide sequence ID" value="NM_125042.4"/>
</dbReference>
<dbReference type="SMR" id="Q9FJU9"/>
<dbReference type="FunCoup" id="Q9FJU9">
    <property type="interactions" value="94"/>
</dbReference>
<dbReference type="STRING" id="3702.Q9FJU9"/>
<dbReference type="CAZy" id="CBM43">
    <property type="family name" value="Carbohydrate-Binding Module Family 43"/>
</dbReference>
<dbReference type="CAZy" id="GH17">
    <property type="family name" value="Glycoside Hydrolase Family 17"/>
</dbReference>
<dbReference type="GlyGen" id="Q9FJU9">
    <property type="glycosylation" value="8 sites"/>
</dbReference>
<dbReference type="PaxDb" id="3702-AT5G56590.1"/>
<dbReference type="ProteomicsDB" id="222006"/>
<dbReference type="EnsemblPlants" id="AT5G56590.1">
    <property type="protein sequence ID" value="AT5G56590.1"/>
    <property type="gene ID" value="AT5G56590"/>
</dbReference>
<dbReference type="GeneID" id="835760"/>
<dbReference type="Gramene" id="AT5G56590.1">
    <property type="protein sequence ID" value="AT5G56590.1"/>
    <property type="gene ID" value="AT5G56590"/>
</dbReference>
<dbReference type="KEGG" id="ath:AT5G56590"/>
<dbReference type="Araport" id="AT5G56590"/>
<dbReference type="TAIR" id="AT5G56590"/>
<dbReference type="eggNOG" id="ENOG502QQHU">
    <property type="taxonomic scope" value="Eukaryota"/>
</dbReference>
<dbReference type="HOGENOM" id="CLU_024953_3_4_1"/>
<dbReference type="InParanoid" id="Q9FJU9"/>
<dbReference type="OMA" id="YVRIYDY"/>
<dbReference type="OrthoDB" id="941679at2759"/>
<dbReference type="PhylomeDB" id="Q9FJU9"/>
<dbReference type="BioCyc" id="ARA:AT5G56590-MONOMER"/>
<dbReference type="PRO" id="PR:Q9FJU9"/>
<dbReference type="Proteomes" id="UP000006548">
    <property type="component" value="Chromosome 5"/>
</dbReference>
<dbReference type="ExpressionAtlas" id="Q9FJU9">
    <property type="expression patterns" value="baseline and differential"/>
</dbReference>
<dbReference type="GO" id="GO:0005576">
    <property type="term" value="C:extracellular region"/>
    <property type="evidence" value="ECO:0007669"/>
    <property type="project" value="UniProtKB-KW"/>
</dbReference>
<dbReference type="GO" id="GO:0005886">
    <property type="term" value="C:plasma membrane"/>
    <property type="evidence" value="ECO:0007005"/>
    <property type="project" value="TAIR"/>
</dbReference>
<dbReference type="GO" id="GO:0009536">
    <property type="term" value="C:plastid"/>
    <property type="evidence" value="ECO:0007005"/>
    <property type="project" value="TAIR"/>
</dbReference>
<dbReference type="GO" id="GO:0098552">
    <property type="term" value="C:side of membrane"/>
    <property type="evidence" value="ECO:0007669"/>
    <property type="project" value="UniProtKB-KW"/>
</dbReference>
<dbReference type="GO" id="GO:0042973">
    <property type="term" value="F:glucan endo-1,3-beta-D-glucosidase activity"/>
    <property type="evidence" value="ECO:0007669"/>
    <property type="project" value="UniProtKB-EC"/>
</dbReference>
<dbReference type="GO" id="GO:0005975">
    <property type="term" value="P:carbohydrate metabolic process"/>
    <property type="evidence" value="ECO:0007669"/>
    <property type="project" value="InterPro"/>
</dbReference>
<dbReference type="GO" id="GO:0071555">
    <property type="term" value="P:cell wall organization"/>
    <property type="evidence" value="ECO:0007669"/>
    <property type="project" value="UniProtKB-KW"/>
</dbReference>
<dbReference type="GO" id="GO:0006952">
    <property type="term" value="P:defense response"/>
    <property type="evidence" value="ECO:0007669"/>
    <property type="project" value="UniProtKB-KW"/>
</dbReference>
<dbReference type="FunFam" id="1.20.58.1040:FF:000008">
    <property type="entry name" value="Glucan endo-1,3-beta-glucosidase 13"/>
    <property type="match status" value="1"/>
</dbReference>
<dbReference type="FunFam" id="3.20.20.80:FF:000002">
    <property type="entry name" value="Glucan endo-1,3-beta-glucosidase 3"/>
    <property type="match status" value="1"/>
</dbReference>
<dbReference type="Gene3D" id="1.20.58.1040">
    <property type="match status" value="1"/>
</dbReference>
<dbReference type="Gene3D" id="3.20.20.80">
    <property type="entry name" value="Glycosidases"/>
    <property type="match status" value="1"/>
</dbReference>
<dbReference type="InterPro" id="IPR000490">
    <property type="entry name" value="Glyco_hydro_17"/>
</dbReference>
<dbReference type="InterPro" id="IPR044965">
    <property type="entry name" value="Glyco_hydro_17_plant"/>
</dbReference>
<dbReference type="InterPro" id="IPR017853">
    <property type="entry name" value="Glycoside_hydrolase_SF"/>
</dbReference>
<dbReference type="InterPro" id="IPR012946">
    <property type="entry name" value="X8"/>
</dbReference>
<dbReference type="PANTHER" id="PTHR32227">
    <property type="entry name" value="GLUCAN ENDO-1,3-BETA-GLUCOSIDASE BG1-RELATED-RELATED"/>
    <property type="match status" value="1"/>
</dbReference>
<dbReference type="Pfam" id="PF00332">
    <property type="entry name" value="Glyco_hydro_17"/>
    <property type="match status" value="1"/>
</dbReference>
<dbReference type="Pfam" id="PF07983">
    <property type="entry name" value="X8"/>
    <property type="match status" value="1"/>
</dbReference>
<dbReference type="SMART" id="SM00768">
    <property type="entry name" value="X8"/>
    <property type="match status" value="1"/>
</dbReference>
<dbReference type="SUPFAM" id="SSF51445">
    <property type="entry name" value="(Trans)glycosidases"/>
    <property type="match status" value="1"/>
</dbReference>
<dbReference type="PROSITE" id="PS00587">
    <property type="entry name" value="GLYCOSYL_HYDROL_F17"/>
    <property type="match status" value="1"/>
</dbReference>
<comment type="catalytic activity">
    <reaction>
        <text>Hydrolysis of (1-&gt;3)-beta-D-glucosidic linkages in (1-&gt;3)-beta-D-glucans.</text>
        <dbReference type="EC" id="3.2.1.39"/>
    </reaction>
</comment>
<comment type="subcellular location">
    <subcellularLocation>
        <location evidence="4">Secreted</location>
        <location evidence="4">Cell wall</location>
    </subcellularLocation>
    <subcellularLocation>
        <location>Cell membrane</location>
        <topology>Lipid-anchor</topology>
        <topology>GPI-anchor</topology>
        <orientation>Extracellular side</orientation>
    </subcellularLocation>
</comment>
<comment type="PTM">
    <text evidence="1">Contains two additional disulfide bonds.</text>
</comment>
<comment type="similarity">
    <text evidence="4">Belongs to the glycosyl hydrolase 17 family.</text>
</comment>
<sequence length="506" mass="55604">MARDFKLIFSISILLLLLDCCYGGKVGVCYGRSADDLPTPSKVVQLIQQHNIKYVRIYDYNSQVLKAFGNTSIELMIGVPNSDLNAFSQSQSNVDTWLKNSVLPYYPTTKITYITVGAESTDDPHINASSFVVPAMQNVLTALRKVGLSRRIKVSTTLSLGILSRSFPPSAGAFNSSYAYFLRPMLEFLAENKSPFMIDLYPYYAYRDSPNNVSLDYVLFESSSEVIDPNTGLLYKNMFDAQVDALYYALTALNFRTIKIMVTETGWPTKGSPKEKAAASSDNAETYNSNIIRHVVTNQGTPAKPGEAMNVYIFSLFNENRKAGLDSERNWGLFYPDQTSVYQLDFTGKSNGFHSNSSGTNSSGSSNSWCIASSKASERDLKGALDWACGPGNVDCTAIQPSQPCFQPDTLVSHASFVFNSYFQQNRATDVACSFGGAGVKVNKDPSYDKCIYITAGGNKTKATNATALTSSASTPRGNELLQWILKLCLMISLFFSLQTMNSQAL</sequence>
<accession>Q9FJU9</accession>
<organism>
    <name type="scientific">Arabidopsis thaliana</name>
    <name type="common">Mouse-ear cress</name>
    <dbReference type="NCBI Taxonomy" id="3702"/>
    <lineage>
        <taxon>Eukaryota</taxon>
        <taxon>Viridiplantae</taxon>
        <taxon>Streptophyta</taxon>
        <taxon>Embryophyta</taxon>
        <taxon>Tracheophyta</taxon>
        <taxon>Spermatophyta</taxon>
        <taxon>Magnoliopsida</taxon>
        <taxon>eudicotyledons</taxon>
        <taxon>Gunneridae</taxon>
        <taxon>Pentapetalae</taxon>
        <taxon>rosids</taxon>
        <taxon>malvids</taxon>
        <taxon>Brassicales</taxon>
        <taxon>Brassicaceae</taxon>
        <taxon>Camelineae</taxon>
        <taxon>Arabidopsis</taxon>
    </lineage>
</organism>
<evidence type="ECO:0000250" key="1"/>
<evidence type="ECO:0000250" key="2">
    <source>
        <dbReference type="UniProtKB" id="O22317"/>
    </source>
</evidence>
<evidence type="ECO:0000255" key="3"/>
<evidence type="ECO:0000305" key="4"/>
<keyword id="KW-1003">Cell membrane</keyword>
<keyword id="KW-0134">Cell wall</keyword>
<keyword id="KW-0961">Cell wall biogenesis/degradation</keyword>
<keyword id="KW-1015">Disulfide bond</keyword>
<keyword id="KW-0325">Glycoprotein</keyword>
<keyword id="KW-0326">Glycosidase</keyword>
<keyword id="KW-0336">GPI-anchor</keyword>
<keyword id="KW-0378">Hydrolase</keyword>
<keyword id="KW-0449">Lipoprotein</keyword>
<keyword id="KW-0472">Membrane</keyword>
<keyword id="KW-0611">Plant defense</keyword>
<keyword id="KW-1185">Reference proteome</keyword>
<keyword id="KW-0964">Secreted</keyword>
<keyword id="KW-0732">Signal</keyword>
<gene>
    <name type="ordered locus">At5g56590</name>
    <name type="ORF">MIK19.3</name>
</gene>
<feature type="signal peptide" evidence="3">
    <location>
        <begin position="1"/>
        <end position="22"/>
    </location>
</feature>
<feature type="chain" id="PRO_0000251273" description="Glucan endo-1,3-beta-glucosidase 13">
    <location>
        <begin position="23"/>
        <end position="471"/>
    </location>
</feature>
<feature type="propeptide" id="PRO_0000251274" description="Removed in mature form" evidence="3">
    <location>
        <begin position="472"/>
        <end position="506"/>
    </location>
</feature>
<feature type="active site" description="Proton donor" evidence="2">
    <location>
        <position position="119"/>
    </location>
</feature>
<feature type="active site" description="Nucleophile" evidence="2">
    <location>
        <position position="264"/>
    </location>
</feature>
<feature type="lipid moiety-binding region" description="GPI-anchor amidated serine" evidence="3">
    <location>
        <position position="471"/>
    </location>
</feature>
<feature type="glycosylation site" description="N-linked (GlcNAc...) asparagine" evidence="3">
    <location>
        <position position="70"/>
    </location>
</feature>
<feature type="glycosylation site" description="N-linked (GlcNAc...) asparagine" evidence="3">
    <location>
        <position position="127"/>
    </location>
</feature>
<feature type="glycosylation site" description="N-linked (GlcNAc...) asparagine" evidence="3">
    <location>
        <position position="175"/>
    </location>
</feature>
<feature type="glycosylation site" description="N-linked (GlcNAc...) asparagine" evidence="3">
    <location>
        <position position="212"/>
    </location>
</feature>
<feature type="glycosylation site" description="N-linked (GlcNAc...) asparagine" evidence="3">
    <location>
        <position position="356"/>
    </location>
</feature>
<feature type="glycosylation site" description="N-linked (GlcNAc...) asparagine" evidence="3">
    <location>
        <position position="361"/>
    </location>
</feature>
<feature type="glycosylation site" description="N-linked (GlcNAc...) asparagine" evidence="3">
    <location>
        <position position="459"/>
    </location>
</feature>
<feature type="glycosylation site" description="N-linked (GlcNAc...) asparagine" evidence="3">
    <location>
        <position position="465"/>
    </location>
</feature>
<feature type="disulfide bond" evidence="1">
    <location>
        <begin position="370"/>
        <end position="433"/>
    </location>
</feature>
<protein>
    <recommendedName>
        <fullName>Glucan endo-1,3-beta-glucosidase 13</fullName>
        <ecNumber>3.2.1.39</ecNumber>
    </recommendedName>
    <alternativeName>
        <fullName>(1-&gt;3)-beta-glucan endohydrolase 13</fullName>
        <shortName>(1-&gt;3)-beta-glucanase 13</shortName>
    </alternativeName>
    <alternativeName>
        <fullName>Beta-1,3-endoglucanase 13</fullName>
        <shortName>Beta-1,3-glucanase 13</shortName>
    </alternativeName>
</protein>
<reference key="1">
    <citation type="journal article" date="1998" name="DNA Res.">
        <title>Structural analysis of Arabidopsis thaliana chromosome 5. VI. Sequence features of the regions of 1,367,185 bp covered by 19 physically assigned P1 and TAC clones.</title>
        <authorList>
            <person name="Kotani H."/>
            <person name="Nakamura Y."/>
            <person name="Sato S."/>
            <person name="Asamizu E."/>
            <person name="Kaneko T."/>
            <person name="Miyajima N."/>
            <person name="Tabata S."/>
        </authorList>
    </citation>
    <scope>NUCLEOTIDE SEQUENCE [LARGE SCALE GENOMIC DNA]</scope>
    <source>
        <strain>cv. Columbia</strain>
    </source>
</reference>
<reference key="2">
    <citation type="journal article" date="2017" name="Plant J.">
        <title>Araport11: a complete reannotation of the Arabidopsis thaliana reference genome.</title>
        <authorList>
            <person name="Cheng C.Y."/>
            <person name="Krishnakumar V."/>
            <person name="Chan A.P."/>
            <person name="Thibaud-Nissen F."/>
            <person name="Schobel S."/>
            <person name="Town C.D."/>
        </authorList>
    </citation>
    <scope>GENOME REANNOTATION</scope>
    <source>
        <strain>cv. Columbia</strain>
    </source>
</reference>
<reference key="3">
    <citation type="journal article" date="2003" name="Science">
        <title>Empirical analysis of transcriptional activity in the Arabidopsis genome.</title>
        <authorList>
            <person name="Yamada K."/>
            <person name="Lim J."/>
            <person name="Dale J.M."/>
            <person name="Chen H."/>
            <person name="Shinn P."/>
            <person name="Palm C.J."/>
            <person name="Southwick A.M."/>
            <person name="Wu H.C."/>
            <person name="Kim C.J."/>
            <person name="Nguyen M."/>
            <person name="Pham P.K."/>
            <person name="Cheuk R.F."/>
            <person name="Karlin-Newmann G."/>
            <person name="Liu S.X."/>
            <person name="Lam B."/>
            <person name="Sakano H."/>
            <person name="Wu T."/>
            <person name="Yu G."/>
            <person name="Miranda M."/>
            <person name="Quach H.L."/>
            <person name="Tripp M."/>
            <person name="Chang C.H."/>
            <person name="Lee J.M."/>
            <person name="Toriumi M.J."/>
            <person name="Chan M.M."/>
            <person name="Tang C.C."/>
            <person name="Onodera C.S."/>
            <person name="Deng J.M."/>
            <person name="Akiyama K."/>
            <person name="Ansari Y."/>
            <person name="Arakawa T."/>
            <person name="Banh J."/>
            <person name="Banno F."/>
            <person name="Bowser L."/>
            <person name="Brooks S.Y."/>
            <person name="Carninci P."/>
            <person name="Chao Q."/>
            <person name="Choy N."/>
            <person name="Enju A."/>
            <person name="Goldsmith A.D."/>
            <person name="Gurjal M."/>
            <person name="Hansen N.F."/>
            <person name="Hayashizaki Y."/>
            <person name="Johnson-Hopson C."/>
            <person name="Hsuan V.W."/>
            <person name="Iida K."/>
            <person name="Karnes M."/>
            <person name="Khan S."/>
            <person name="Koesema E."/>
            <person name="Ishida J."/>
            <person name="Jiang P.X."/>
            <person name="Jones T."/>
            <person name="Kawai J."/>
            <person name="Kamiya A."/>
            <person name="Meyers C."/>
            <person name="Nakajima M."/>
            <person name="Narusaka M."/>
            <person name="Seki M."/>
            <person name="Sakurai T."/>
            <person name="Satou M."/>
            <person name="Tamse R."/>
            <person name="Vaysberg M."/>
            <person name="Wallender E.K."/>
            <person name="Wong C."/>
            <person name="Yamamura Y."/>
            <person name="Yuan S."/>
            <person name="Shinozaki K."/>
            <person name="Davis R.W."/>
            <person name="Theologis A."/>
            <person name="Ecker J.R."/>
        </authorList>
    </citation>
    <scope>NUCLEOTIDE SEQUENCE [LARGE SCALE MRNA]</scope>
    <source>
        <strain>cv. Columbia</strain>
    </source>
</reference>